<gene>
    <name evidence="1" type="primary">nhaB</name>
    <name type="ordered locus">Tola_0173</name>
</gene>
<organism>
    <name type="scientific">Tolumonas auensis (strain DSM 9187 / NBRC 110442 / TA 4)</name>
    <dbReference type="NCBI Taxonomy" id="595494"/>
    <lineage>
        <taxon>Bacteria</taxon>
        <taxon>Pseudomonadati</taxon>
        <taxon>Pseudomonadota</taxon>
        <taxon>Gammaproteobacteria</taxon>
        <taxon>Aeromonadales</taxon>
        <taxon>Aeromonadaceae</taxon>
        <taxon>Tolumonas</taxon>
    </lineage>
</organism>
<name>NHAB_TOLAT</name>
<reference key="1">
    <citation type="submission" date="2009-05" db="EMBL/GenBank/DDBJ databases">
        <title>Complete sequence of Tolumonas auensis DSM 9187.</title>
        <authorList>
            <consortium name="US DOE Joint Genome Institute"/>
            <person name="Lucas S."/>
            <person name="Copeland A."/>
            <person name="Lapidus A."/>
            <person name="Glavina del Rio T."/>
            <person name="Tice H."/>
            <person name="Bruce D."/>
            <person name="Goodwin L."/>
            <person name="Pitluck S."/>
            <person name="Chertkov O."/>
            <person name="Brettin T."/>
            <person name="Detter J.C."/>
            <person name="Han C."/>
            <person name="Larimer F."/>
            <person name="Land M."/>
            <person name="Hauser L."/>
            <person name="Kyrpides N."/>
            <person name="Mikhailova N."/>
            <person name="Spring S."/>
            <person name="Beller H."/>
        </authorList>
    </citation>
    <scope>NUCLEOTIDE SEQUENCE [LARGE SCALE GENOMIC DNA]</scope>
    <source>
        <strain>DSM 9187 / NBRC 110442 / TA 4</strain>
    </source>
</reference>
<protein>
    <recommendedName>
        <fullName evidence="1">Na(+)/H(+) antiporter NhaB</fullName>
    </recommendedName>
    <alternativeName>
        <fullName evidence="1">Sodium/proton antiporter NhaB</fullName>
    </alternativeName>
</protein>
<sequence length="523" mass="57438">MVASMASALARNFLGSTPRWYKMTIVMFLIINPFIVALNPFVAGWLLVAEFIFTLSMALKCYPLLPGGLLALEAVFSGLTSAEQVKHELSANLEVLLLLMFMVAGIYFVRQLLLYVFTKLLISVRSKIALSLAFSVMAAFLSAFLDALTVVAVVISISVGFYSVYHKYVSTHPEHDINNDDSIHKQHHADLEQFRAFLRSLLMHAAVGTALGGVCTLVGEPQNLIIGEMAGWNFSEFFIRMSAVSIPVLICGLATCVLMEKLKWFGYGTVIPESVYLILKQSADHDDAHRTTQERLKLVCQAIICVWLIVGLAFHLAAVGLIGLSVIILATTFTGVSDEHAIGRAFTESLPFTALLSVFFVVVAVIIDQELFRPLIQMVLSAPQEMQLTLFYIANGVLSMVSDNVFVGTVYINEAHTALVNNVISRDHFDLLAVAINTGTNLPSVATPNGQAAFLFLLTSTLAPLVRMSYGRMMWMALPYTIVLAGVGLLSTMYLLPDMTQWFYESGWLQHKAAIPVITPASH</sequence>
<proteinExistence type="inferred from homology"/>
<dbReference type="EMBL" id="CP001616">
    <property type="protein sequence ID" value="ACQ91803.1"/>
    <property type="molecule type" value="Genomic_DNA"/>
</dbReference>
<dbReference type="RefSeq" id="WP_012728402.1">
    <property type="nucleotide sequence ID" value="NC_012691.1"/>
</dbReference>
<dbReference type="SMR" id="C4L804"/>
<dbReference type="STRING" id="595494.Tola_0173"/>
<dbReference type="KEGG" id="tau:Tola_0173"/>
<dbReference type="eggNOG" id="COG3067">
    <property type="taxonomic scope" value="Bacteria"/>
</dbReference>
<dbReference type="HOGENOM" id="CLU_041110_0_0_6"/>
<dbReference type="OrthoDB" id="5288732at2"/>
<dbReference type="Proteomes" id="UP000009073">
    <property type="component" value="Chromosome"/>
</dbReference>
<dbReference type="GO" id="GO:0005886">
    <property type="term" value="C:plasma membrane"/>
    <property type="evidence" value="ECO:0007669"/>
    <property type="project" value="UniProtKB-SubCell"/>
</dbReference>
<dbReference type="GO" id="GO:0015385">
    <property type="term" value="F:sodium:proton antiporter activity"/>
    <property type="evidence" value="ECO:0007669"/>
    <property type="project" value="InterPro"/>
</dbReference>
<dbReference type="HAMAP" id="MF_01599">
    <property type="entry name" value="NhaB"/>
    <property type="match status" value="1"/>
</dbReference>
<dbReference type="InterPro" id="IPR004671">
    <property type="entry name" value="Na+/H+_antiporter_NhaB"/>
</dbReference>
<dbReference type="NCBIfam" id="TIGR00774">
    <property type="entry name" value="NhaB"/>
    <property type="match status" value="1"/>
</dbReference>
<dbReference type="NCBIfam" id="NF007093">
    <property type="entry name" value="PRK09547.1"/>
    <property type="match status" value="1"/>
</dbReference>
<dbReference type="PANTHER" id="PTHR43302:SF1">
    <property type="entry name" value="NA(+)_H(+) ANTIPORTER NHAB"/>
    <property type="match status" value="1"/>
</dbReference>
<dbReference type="PANTHER" id="PTHR43302">
    <property type="entry name" value="TRANSPORTER ARSB-RELATED"/>
    <property type="match status" value="1"/>
</dbReference>
<dbReference type="Pfam" id="PF06450">
    <property type="entry name" value="NhaB"/>
    <property type="match status" value="1"/>
</dbReference>
<evidence type="ECO:0000255" key="1">
    <source>
        <dbReference type="HAMAP-Rule" id="MF_01599"/>
    </source>
</evidence>
<comment type="function">
    <text evidence="1">Na(+)/H(+) antiporter that extrudes sodium in exchange for external protons.</text>
</comment>
<comment type="catalytic activity">
    <reaction evidence="1">
        <text>2 Na(+)(in) + 3 H(+)(out) = 2 Na(+)(out) + 3 H(+)(in)</text>
        <dbReference type="Rhea" id="RHEA:29247"/>
        <dbReference type="ChEBI" id="CHEBI:15378"/>
        <dbReference type="ChEBI" id="CHEBI:29101"/>
    </reaction>
    <physiologicalReaction direction="left-to-right" evidence="1">
        <dbReference type="Rhea" id="RHEA:29248"/>
    </physiologicalReaction>
</comment>
<comment type="subcellular location">
    <subcellularLocation>
        <location evidence="1">Cell inner membrane</location>
        <topology evidence="1">Multi-pass membrane protein</topology>
    </subcellularLocation>
</comment>
<comment type="similarity">
    <text evidence="1">Belongs to the NhaB Na(+)/H(+) (TC 2.A.34) antiporter family.</text>
</comment>
<accession>C4L804</accession>
<feature type="chain" id="PRO_1000215680" description="Na(+)/H(+) antiporter NhaB">
    <location>
        <begin position="1"/>
        <end position="523"/>
    </location>
</feature>
<feature type="transmembrane region" description="Helical" evidence="1">
    <location>
        <begin position="28"/>
        <end position="48"/>
    </location>
</feature>
<feature type="transmembrane region" description="Helical" evidence="1">
    <location>
        <begin position="51"/>
        <end position="71"/>
    </location>
</feature>
<feature type="transmembrane region" description="Helical" evidence="1">
    <location>
        <begin position="89"/>
        <end position="109"/>
    </location>
</feature>
<feature type="transmembrane region" description="Helical" evidence="1">
    <location>
        <begin position="137"/>
        <end position="157"/>
    </location>
</feature>
<feature type="transmembrane region" description="Helical" evidence="1">
    <location>
        <begin position="237"/>
        <end position="257"/>
    </location>
</feature>
<feature type="transmembrane region" description="Helical" evidence="1">
    <location>
        <begin position="302"/>
        <end position="322"/>
    </location>
</feature>
<feature type="transmembrane region" description="Helical" evidence="1">
    <location>
        <begin position="347"/>
        <end position="367"/>
    </location>
</feature>
<feature type="transmembrane region" description="Helical" evidence="1">
    <location>
        <begin position="390"/>
        <end position="410"/>
    </location>
</feature>
<feature type="transmembrane region" description="Helical" evidence="1">
    <location>
        <begin position="445"/>
        <end position="465"/>
    </location>
</feature>
<feature type="transmembrane region" description="Helical" evidence="1">
    <location>
        <begin position="476"/>
        <end position="496"/>
    </location>
</feature>
<keyword id="KW-0050">Antiport</keyword>
<keyword id="KW-0997">Cell inner membrane</keyword>
<keyword id="KW-1003">Cell membrane</keyword>
<keyword id="KW-0406">Ion transport</keyword>
<keyword id="KW-0472">Membrane</keyword>
<keyword id="KW-1185">Reference proteome</keyword>
<keyword id="KW-0915">Sodium</keyword>
<keyword id="KW-0739">Sodium transport</keyword>
<keyword id="KW-0812">Transmembrane</keyword>
<keyword id="KW-1133">Transmembrane helix</keyword>
<keyword id="KW-0813">Transport</keyword>